<geneLocation type="plasmid">
    <name>pTDN1</name>
</geneLocation>
<sequence length="63" mass="6927">MPFAQIYMIEGRTEAQKKAVIEKVSQALVEATGAPMANVRVWIQEVPKENWGIAGVSAKELGR</sequence>
<organism>
    <name type="scientific">Pseudomonas putida</name>
    <name type="common">Arthrobacter siderocapsulatus</name>
    <dbReference type="NCBI Taxonomy" id="303"/>
    <lineage>
        <taxon>Bacteria</taxon>
        <taxon>Pseudomonadati</taxon>
        <taxon>Pseudomonadota</taxon>
        <taxon>Gammaproteobacteria</taxon>
        <taxon>Pseudomonadales</taxon>
        <taxon>Pseudomonadaceae</taxon>
        <taxon>Pseudomonas</taxon>
    </lineage>
</organism>
<dbReference type="EC" id="5.3.2.6"/>
<dbReference type="EMBL" id="D85415">
    <property type="protein sequence ID" value="BAB62059.1"/>
    <property type="molecule type" value="Genomic_DNA"/>
</dbReference>
<dbReference type="SMR" id="Q93JW0"/>
<dbReference type="UniPathway" id="UPA00824"/>
<dbReference type="GO" id="GO:0016853">
    <property type="term" value="F:isomerase activity"/>
    <property type="evidence" value="ECO:0007669"/>
    <property type="project" value="UniProtKB-KW"/>
</dbReference>
<dbReference type="GO" id="GO:0046244">
    <property type="term" value="P:salicylic acid catabolic process"/>
    <property type="evidence" value="ECO:0007669"/>
    <property type="project" value="UniProtKB-UniPathway"/>
</dbReference>
<dbReference type="CDD" id="cd00491">
    <property type="entry name" value="4Oxalocrotonate_Tautomerase"/>
    <property type="match status" value="1"/>
</dbReference>
<dbReference type="Gene3D" id="3.30.429.10">
    <property type="entry name" value="Macrophage Migration Inhibitory Factor"/>
    <property type="match status" value="1"/>
</dbReference>
<dbReference type="InterPro" id="IPR018191">
    <property type="entry name" value="4-OT"/>
</dbReference>
<dbReference type="InterPro" id="IPR004370">
    <property type="entry name" value="4-OT-like_dom"/>
</dbReference>
<dbReference type="InterPro" id="IPR014347">
    <property type="entry name" value="Tautomerase/MIF_sf"/>
</dbReference>
<dbReference type="NCBIfam" id="NF002571">
    <property type="entry name" value="PRK02220.1"/>
    <property type="match status" value="1"/>
</dbReference>
<dbReference type="NCBIfam" id="TIGR00013">
    <property type="entry name" value="taut"/>
    <property type="match status" value="1"/>
</dbReference>
<dbReference type="PANTHER" id="PTHR35530:SF1">
    <property type="entry name" value="2-HYDROXYMUCONATE TAUTOMERASE"/>
    <property type="match status" value="1"/>
</dbReference>
<dbReference type="PANTHER" id="PTHR35530">
    <property type="entry name" value="TAUTOMERASE-RELATED"/>
    <property type="match status" value="1"/>
</dbReference>
<dbReference type="Pfam" id="PF01361">
    <property type="entry name" value="Tautomerase"/>
    <property type="match status" value="1"/>
</dbReference>
<dbReference type="SUPFAM" id="SSF55331">
    <property type="entry name" value="Tautomerase/MIF"/>
    <property type="match status" value="1"/>
</dbReference>
<proteinExistence type="inferred from homology"/>
<feature type="initiator methionine" description="Removed" evidence="1">
    <location>
        <position position="1"/>
    </location>
</feature>
<feature type="chain" id="PRO_0000209517" description="2-hydroxymuconate tautomerase">
    <location>
        <begin position="2"/>
        <end position="63"/>
    </location>
</feature>
<feature type="active site" description="Proton acceptor; via imino nitrogen" evidence="1">
    <location>
        <position position="2"/>
    </location>
</feature>
<gene>
    <name type="primary">tdnL</name>
</gene>
<keyword id="KW-0058">Aromatic hydrocarbons catabolism</keyword>
<keyword id="KW-0413">Isomerase</keyword>
<keyword id="KW-0614">Plasmid</keyword>
<name>4OT4_PSEPU</name>
<protein>
    <recommendedName>
        <fullName>2-hydroxymuconate tautomerase</fullName>
        <ecNumber>5.3.2.6</ecNumber>
    </recommendedName>
    <alternativeName>
        <fullName>4-oxalocrotonate tautomerase</fullName>
        <shortName>4-OT</shortName>
    </alternativeName>
</protein>
<evidence type="ECO:0000250" key="1"/>
<evidence type="ECO:0000305" key="2"/>
<comment type="function">
    <text>Catalyzes the ketonization of 2-hydroxymuconate stereoselectively to yield 2-oxo-3-hexenedioate.</text>
</comment>
<comment type="catalytic activity">
    <reaction>
        <text>(2Z,4E)-2-hydroxyhexa-2,4-dienedioate = (3E)-2-oxohex-3-enedioate</text>
        <dbReference type="Rhea" id="RHEA:33431"/>
        <dbReference type="ChEBI" id="CHEBI:28080"/>
        <dbReference type="ChEBI" id="CHEBI:64908"/>
        <dbReference type="EC" id="5.3.2.6"/>
    </reaction>
</comment>
<comment type="pathway">
    <text>Aromatic compound metabolism; salicylate degradation.</text>
</comment>
<comment type="subunit">
    <text evidence="1">Homohexamer.</text>
</comment>
<comment type="similarity">
    <text evidence="2">Belongs to the 4-oxalocrotonate tautomerase family.</text>
</comment>
<reference key="1">
    <citation type="submission" date="1996-05" db="EMBL/GenBank/DDBJ databases">
        <authorList>
            <person name="Fukumori F."/>
        </authorList>
    </citation>
    <scope>NUCLEOTIDE SEQUENCE [GENOMIC DNA]</scope>
    <source>
        <strain>UCC22</strain>
    </source>
</reference>
<accession>Q93JW0</accession>